<proteinExistence type="inferred from homology"/>
<protein>
    <recommendedName>
        <fullName evidence="1">Probable endonuclease 4</fullName>
        <ecNumber evidence="1">3.1.21.2</ecNumber>
    </recommendedName>
    <alternativeName>
        <fullName evidence="1">Endodeoxyribonuclease IV</fullName>
    </alternativeName>
    <alternativeName>
        <fullName evidence="1">Endonuclease IV</fullName>
    </alternativeName>
</protein>
<keyword id="KW-0227">DNA damage</keyword>
<keyword id="KW-0234">DNA repair</keyword>
<keyword id="KW-0255">Endonuclease</keyword>
<keyword id="KW-0378">Hydrolase</keyword>
<keyword id="KW-0479">Metal-binding</keyword>
<keyword id="KW-0540">Nuclease</keyword>
<keyword id="KW-1185">Reference proteome</keyword>
<keyword id="KW-0862">Zinc</keyword>
<feature type="chain" id="PRO_0000190863" description="Probable endonuclease 4">
    <location>
        <begin position="1"/>
        <end position="282"/>
    </location>
</feature>
<feature type="binding site" evidence="1">
    <location>
        <position position="71"/>
    </location>
    <ligand>
        <name>Zn(2+)</name>
        <dbReference type="ChEBI" id="CHEBI:29105"/>
        <label>1</label>
    </ligand>
</feature>
<feature type="binding site" evidence="1">
    <location>
        <position position="111"/>
    </location>
    <ligand>
        <name>Zn(2+)</name>
        <dbReference type="ChEBI" id="CHEBI:29105"/>
        <label>1</label>
    </ligand>
</feature>
<feature type="binding site" evidence="1">
    <location>
        <position position="147"/>
    </location>
    <ligand>
        <name>Zn(2+)</name>
        <dbReference type="ChEBI" id="CHEBI:29105"/>
        <label>1</label>
    </ligand>
</feature>
<feature type="binding site" evidence="1">
    <location>
        <position position="147"/>
    </location>
    <ligand>
        <name>Zn(2+)</name>
        <dbReference type="ChEBI" id="CHEBI:29105"/>
        <label>2</label>
    </ligand>
</feature>
<feature type="binding site" evidence="1">
    <location>
        <position position="181"/>
    </location>
    <ligand>
        <name>Zn(2+)</name>
        <dbReference type="ChEBI" id="CHEBI:29105"/>
        <label>2</label>
    </ligand>
</feature>
<feature type="binding site" evidence="1">
    <location>
        <position position="184"/>
    </location>
    <ligand>
        <name>Zn(2+)</name>
        <dbReference type="ChEBI" id="CHEBI:29105"/>
        <label>3</label>
    </ligand>
</feature>
<feature type="binding site" evidence="1">
    <location>
        <position position="218"/>
    </location>
    <ligand>
        <name>Zn(2+)</name>
        <dbReference type="ChEBI" id="CHEBI:29105"/>
        <label>2</label>
    </ligand>
</feature>
<feature type="binding site" evidence="1">
    <location>
        <position position="231"/>
    </location>
    <ligand>
        <name>Zn(2+)</name>
        <dbReference type="ChEBI" id="CHEBI:29105"/>
        <label>3</label>
    </ligand>
</feature>
<feature type="binding site" evidence="1">
    <location>
        <position position="233"/>
    </location>
    <ligand>
        <name>Zn(2+)</name>
        <dbReference type="ChEBI" id="CHEBI:29105"/>
        <label>3</label>
    </ligand>
</feature>
<feature type="binding site" evidence="1">
    <location>
        <position position="263"/>
    </location>
    <ligand>
        <name>Zn(2+)</name>
        <dbReference type="ChEBI" id="CHEBI:29105"/>
        <label>2</label>
    </ligand>
</feature>
<evidence type="ECO:0000255" key="1">
    <source>
        <dbReference type="HAMAP-Rule" id="MF_00152"/>
    </source>
</evidence>
<reference key="1">
    <citation type="journal article" date="2004" name="Science">
        <title>Illuminating the evolutionary history of chlamydiae.</title>
        <authorList>
            <person name="Horn M."/>
            <person name="Collingro A."/>
            <person name="Schmitz-Esser S."/>
            <person name="Beier C.L."/>
            <person name="Purkhold U."/>
            <person name="Fartmann B."/>
            <person name="Brandt P."/>
            <person name="Nyakatura G.J."/>
            <person name="Droege M."/>
            <person name="Frishman D."/>
            <person name="Rattei T."/>
            <person name="Mewes H.-W."/>
            <person name="Wagner M."/>
        </authorList>
    </citation>
    <scope>NUCLEOTIDE SEQUENCE [LARGE SCALE GENOMIC DNA]</scope>
    <source>
        <strain>UWE25</strain>
    </source>
</reference>
<accession>Q6MED0</accession>
<comment type="function">
    <text evidence="1">Endonuclease IV plays a role in DNA repair. It cleaves phosphodiester bonds at apurinic or apyrimidinic (AP) sites, generating a 3'-hydroxyl group and a 5'-terminal sugar phosphate.</text>
</comment>
<comment type="catalytic activity">
    <reaction evidence="1">
        <text>Endonucleolytic cleavage to 5'-phosphooligonucleotide end-products.</text>
        <dbReference type="EC" id="3.1.21.2"/>
    </reaction>
</comment>
<comment type="cofactor">
    <cofactor evidence="1">
        <name>Zn(2+)</name>
        <dbReference type="ChEBI" id="CHEBI:29105"/>
    </cofactor>
    <text evidence="1">Binds 3 Zn(2+) ions.</text>
</comment>
<comment type="similarity">
    <text evidence="1">Belongs to the AP endonuclease 2 family.</text>
</comment>
<dbReference type="EC" id="3.1.21.2" evidence="1"/>
<dbReference type="EMBL" id="BX908798">
    <property type="protein sequence ID" value="CAF23069.1"/>
    <property type="molecule type" value="Genomic_DNA"/>
</dbReference>
<dbReference type="RefSeq" id="WP_011174895.1">
    <property type="nucleotide sequence ID" value="NC_005861.2"/>
</dbReference>
<dbReference type="SMR" id="Q6MED0"/>
<dbReference type="STRING" id="264201.pc0345"/>
<dbReference type="KEGG" id="pcu:PC_RS01695"/>
<dbReference type="eggNOG" id="COG0648">
    <property type="taxonomic scope" value="Bacteria"/>
</dbReference>
<dbReference type="HOGENOM" id="CLU_025885_0_1_0"/>
<dbReference type="OrthoDB" id="9805666at2"/>
<dbReference type="Proteomes" id="UP000000529">
    <property type="component" value="Chromosome"/>
</dbReference>
<dbReference type="GO" id="GO:0008833">
    <property type="term" value="F:deoxyribonuclease IV (phage-T4-induced) activity"/>
    <property type="evidence" value="ECO:0007669"/>
    <property type="project" value="UniProtKB-UniRule"/>
</dbReference>
<dbReference type="GO" id="GO:0003677">
    <property type="term" value="F:DNA binding"/>
    <property type="evidence" value="ECO:0007669"/>
    <property type="project" value="InterPro"/>
</dbReference>
<dbReference type="GO" id="GO:0003906">
    <property type="term" value="F:DNA-(apurinic or apyrimidinic site) endonuclease activity"/>
    <property type="evidence" value="ECO:0007669"/>
    <property type="project" value="TreeGrafter"/>
</dbReference>
<dbReference type="GO" id="GO:0008081">
    <property type="term" value="F:phosphoric diester hydrolase activity"/>
    <property type="evidence" value="ECO:0007669"/>
    <property type="project" value="TreeGrafter"/>
</dbReference>
<dbReference type="GO" id="GO:0008270">
    <property type="term" value="F:zinc ion binding"/>
    <property type="evidence" value="ECO:0007669"/>
    <property type="project" value="UniProtKB-UniRule"/>
</dbReference>
<dbReference type="GO" id="GO:0006284">
    <property type="term" value="P:base-excision repair"/>
    <property type="evidence" value="ECO:0007669"/>
    <property type="project" value="TreeGrafter"/>
</dbReference>
<dbReference type="CDD" id="cd00019">
    <property type="entry name" value="AP2Ec"/>
    <property type="match status" value="1"/>
</dbReference>
<dbReference type="FunFam" id="3.20.20.150:FF:000001">
    <property type="entry name" value="Probable endonuclease 4"/>
    <property type="match status" value="1"/>
</dbReference>
<dbReference type="Gene3D" id="3.20.20.150">
    <property type="entry name" value="Divalent-metal-dependent TIM barrel enzymes"/>
    <property type="match status" value="1"/>
</dbReference>
<dbReference type="HAMAP" id="MF_00152">
    <property type="entry name" value="Nfo"/>
    <property type="match status" value="1"/>
</dbReference>
<dbReference type="InterPro" id="IPR001719">
    <property type="entry name" value="AP_endonuc_2"/>
</dbReference>
<dbReference type="InterPro" id="IPR018246">
    <property type="entry name" value="AP_endonuc_F2_Zn_BS"/>
</dbReference>
<dbReference type="InterPro" id="IPR036237">
    <property type="entry name" value="Xyl_isomerase-like_sf"/>
</dbReference>
<dbReference type="InterPro" id="IPR013022">
    <property type="entry name" value="Xyl_isomerase-like_TIM-brl"/>
</dbReference>
<dbReference type="NCBIfam" id="TIGR00587">
    <property type="entry name" value="nfo"/>
    <property type="match status" value="1"/>
</dbReference>
<dbReference type="NCBIfam" id="NF002197">
    <property type="entry name" value="PRK01060.1-2"/>
    <property type="match status" value="1"/>
</dbReference>
<dbReference type="NCBIfam" id="NF002199">
    <property type="entry name" value="PRK01060.1-4"/>
    <property type="match status" value="1"/>
</dbReference>
<dbReference type="PANTHER" id="PTHR21445:SF0">
    <property type="entry name" value="APURINIC-APYRIMIDINIC ENDONUCLEASE"/>
    <property type="match status" value="1"/>
</dbReference>
<dbReference type="PANTHER" id="PTHR21445">
    <property type="entry name" value="ENDONUCLEASE IV ENDODEOXYRIBONUCLEASE IV"/>
    <property type="match status" value="1"/>
</dbReference>
<dbReference type="Pfam" id="PF01261">
    <property type="entry name" value="AP_endonuc_2"/>
    <property type="match status" value="1"/>
</dbReference>
<dbReference type="SMART" id="SM00518">
    <property type="entry name" value="AP2Ec"/>
    <property type="match status" value="1"/>
</dbReference>
<dbReference type="SUPFAM" id="SSF51658">
    <property type="entry name" value="Xylose isomerase-like"/>
    <property type="match status" value="1"/>
</dbReference>
<dbReference type="PROSITE" id="PS00729">
    <property type="entry name" value="AP_NUCLEASE_F2_1"/>
    <property type="match status" value="1"/>
</dbReference>
<dbReference type="PROSITE" id="PS00730">
    <property type="entry name" value="AP_NUCLEASE_F2_2"/>
    <property type="match status" value="1"/>
</dbReference>
<dbReference type="PROSITE" id="PS00731">
    <property type="entry name" value="AP_NUCLEASE_F2_3"/>
    <property type="match status" value="1"/>
</dbReference>
<dbReference type="PROSITE" id="PS51432">
    <property type="entry name" value="AP_NUCLEASE_F2_4"/>
    <property type="match status" value="1"/>
</dbReference>
<organism>
    <name type="scientific">Protochlamydia amoebophila (strain UWE25)</name>
    <dbReference type="NCBI Taxonomy" id="264201"/>
    <lineage>
        <taxon>Bacteria</taxon>
        <taxon>Pseudomonadati</taxon>
        <taxon>Chlamydiota</taxon>
        <taxon>Chlamydiia</taxon>
        <taxon>Parachlamydiales</taxon>
        <taxon>Parachlamydiaceae</taxon>
        <taxon>Candidatus Protochlamydia</taxon>
    </lineage>
</organism>
<gene>
    <name evidence="1" type="primary">nfo</name>
    <name type="ordered locus">pc0345</name>
</gene>
<sequence>MSHSNLLLGAHTSAAGGVYRALLEGKKIGATTIQFFTSNQKQWKGRQFTTNDIELWQSTLKETNLTHLMSHDSYLINLGCPNQENLLKSRQAFQEEVIRCTQLGINYLNFHPGASLGEDVQKCLDSIVESLLLVRPFIQGNLRLLLEATAGQGTSVGHKFEQLAYIINGVKDELPIGVCIDTCHIFVAGYDIRTSSAWDFTLKGFDRIIGLPYLYAFHINDSSKDLGSRVDRHQPLGEGKIGWESFEFLMKDSRTRHLPKYLETPGGVDLWEKEIQKLKEFA</sequence>
<name>END4_PARUW</name>